<comment type="subcellular location">
    <subcellularLocation>
        <location evidence="2">Cytoplasm</location>
    </subcellularLocation>
</comment>
<comment type="similarity">
    <text evidence="2">Belongs to the calycin superfamily. Fatty-acid binding protein (FABP) family.</text>
</comment>
<reference key="1">
    <citation type="submission" date="2006-06" db="EMBL/GenBank/DDBJ databases">
        <title>Cloning of a novel human testis-specific gene.</title>
        <authorList>
            <person name="Pouresmaeili F."/>
            <person name="Rabbani H."/>
            <person name="Jeddi Tehrani M."/>
            <person name="Kalili T."/>
        </authorList>
    </citation>
    <scope>NUCLEOTIDE SEQUENCE [GENOMIC DNA]</scope>
</reference>
<reference key="2">
    <citation type="submission" date="2005-07" db="EMBL/GenBank/DDBJ databases">
        <authorList>
            <person name="Mural R.J."/>
            <person name="Istrail S."/>
            <person name="Sutton G.G."/>
            <person name="Florea L."/>
            <person name="Halpern A.L."/>
            <person name="Mobarry C.M."/>
            <person name="Lippert R."/>
            <person name="Walenz B."/>
            <person name="Shatkay H."/>
            <person name="Dew I."/>
            <person name="Miller J.R."/>
            <person name="Flanigan M.J."/>
            <person name="Edwards N.J."/>
            <person name="Bolanos R."/>
            <person name="Fasulo D."/>
            <person name="Halldorsson B.V."/>
            <person name="Hannenhalli S."/>
            <person name="Turner R."/>
            <person name="Yooseph S."/>
            <person name="Lu F."/>
            <person name="Nusskern D.R."/>
            <person name="Shue B.C."/>
            <person name="Zheng X.H."/>
            <person name="Zhong F."/>
            <person name="Delcher A.L."/>
            <person name="Huson D.H."/>
            <person name="Kravitz S.A."/>
            <person name="Mouchard L."/>
            <person name="Reinert K."/>
            <person name="Remington K.A."/>
            <person name="Clark A.G."/>
            <person name="Waterman M.S."/>
            <person name="Eichler E.E."/>
            <person name="Adams M.D."/>
            <person name="Hunkapiller M.W."/>
            <person name="Myers E.W."/>
            <person name="Venter J.C."/>
        </authorList>
    </citation>
    <scope>NUCLEOTIDE SEQUENCE [LARGE SCALE GENOMIC DNA]</scope>
</reference>
<accession>Q0Z7S8</accession>
<gene>
    <name type="primary">FABP9</name>
</gene>
<evidence type="ECO:0000250" key="1">
    <source>
        <dbReference type="UniProtKB" id="P55054"/>
    </source>
</evidence>
<evidence type="ECO:0000305" key="2"/>
<evidence type="ECO:0007829" key="3">
    <source>
        <dbReference type="PDB" id="4A60"/>
    </source>
</evidence>
<sequence>MVEPFLGTWKLVSSENFEDYMKELGVNFAARNMAGLVKPTVTISVDGKMMTIRTESSFQDTKISFKLGEEFDETTADNRKVKSTITLENGSMIHVQKWLGKETTIKRKIVDEKMVVECKMNNIVSTRIYEKV</sequence>
<organism>
    <name type="scientific">Homo sapiens</name>
    <name type="common">Human</name>
    <dbReference type="NCBI Taxonomy" id="9606"/>
    <lineage>
        <taxon>Eukaryota</taxon>
        <taxon>Metazoa</taxon>
        <taxon>Chordata</taxon>
        <taxon>Craniata</taxon>
        <taxon>Vertebrata</taxon>
        <taxon>Euteleostomi</taxon>
        <taxon>Mammalia</taxon>
        <taxon>Eutheria</taxon>
        <taxon>Euarchontoglires</taxon>
        <taxon>Primates</taxon>
        <taxon>Haplorrhini</taxon>
        <taxon>Catarrhini</taxon>
        <taxon>Hominidae</taxon>
        <taxon>Homo</taxon>
    </lineage>
</organism>
<feature type="chain" id="PRO_0000317292" description="Fatty acid-binding protein 9">
    <location>
        <begin position="1"/>
        <end position="132"/>
    </location>
</feature>
<feature type="modified residue" description="Phosphoserine" evidence="1">
    <location>
        <position position="13"/>
    </location>
</feature>
<feature type="modified residue" description="Phosphoserine" evidence="1">
    <location>
        <position position="14"/>
    </location>
</feature>
<feature type="modified residue" description="Phosphoserine" evidence="1">
    <location>
        <position position="44"/>
    </location>
</feature>
<feature type="modified residue" description="Phosphoserine" evidence="1">
    <location>
        <position position="91"/>
    </location>
</feature>
<feature type="helix" evidence="3">
    <location>
        <begin position="3"/>
        <end position="5"/>
    </location>
</feature>
<feature type="strand" evidence="3">
    <location>
        <begin position="7"/>
        <end position="16"/>
    </location>
</feature>
<feature type="helix" evidence="3">
    <location>
        <begin position="17"/>
        <end position="24"/>
    </location>
</feature>
<feature type="helix" evidence="3">
    <location>
        <begin position="28"/>
        <end position="34"/>
    </location>
</feature>
<feature type="strand" evidence="3">
    <location>
        <begin position="40"/>
        <end position="46"/>
    </location>
</feature>
<feature type="strand" evidence="3">
    <location>
        <begin position="49"/>
        <end position="56"/>
    </location>
</feature>
<feature type="strand" evidence="3">
    <location>
        <begin position="59"/>
        <end position="65"/>
    </location>
</feature>
<feature type="strand" evidence="3">
    <location>
        <begin position="71"/>
        <end position="74"/>
    </location>
</feature>
<feature type="strand" evidence="3">
    <location>
        <begin position="80"/>
        <end position="88"/>
    </location>
</feature>
<feature type="strand" evidence="3">
    <location>
        <begin position="91"/>
        <end position="98"/>
    </location>
</feature>
<feature type="strand" evidence="3">
    <location>
        <begin position="101"/>
        <end position="110"/>
    </location>
</feature>
<feature type="strand" evidence="3">
    <location>
        <begin position="113"/>
        <end position="120"/>
    </location>
</feature>
<feature type="strand" evidence="3">
    <location>
        <begin position="123"/>
        <end position="130"/>
    </location>
</feature>
<proteinExistence type="evidence at protein level"/>
<protein>
    <recommendedName>
        <fullName>Fatty acid-binding protein 9</fullName>
    </recommendedName>
    <alternativeName>
        <fullName>Testis lipid-binding protein</fullName>
        <shortName>TLBP</shortName>
    </alternativeName>
    <alternativeName>
        <fullName>Testis-type fatty acid-binding protein</fullName>
        <shortName>T-FABP</shortName>
    </alternativeName>
</protein>
<name>FABP9_HUMAN</name>
<keyword id="KW-0002">3D-structure</keyword>
<keyword id="KW-0963">Cytoplasm</keyword>
<keyword id="KW-0446">Lipid-binding</keyword>
<keyword id="KW-0597">Phosphoprotein</keyword>
<keyword id="KW-1267">Proteomics identification</keyword>
<keyword id="KW-1185">Reference proteome</keyword>
<keyword id="KW-0813">Transport</keyword>
<dbReference type="EMBL" id="DQ821473">
    <property type="protein sequence ID" value="ABG49443.1"/>
    <property type="molecule type" value="Genomic_DNA"/>
</dbReference>
<dbReference type="EMBL" id="CH471068">
    <property type="protein sequence ID" value="EAW87091.1"/>
    <property type="molecule type" value="Genomic_DNA"/>
</dbReference>
<dbReference type="RefSeq" id="NP_001073995.1">
    <property type="nucleotide sequence ID" value="NM_001080526.2"/>
</dbReference>
<dbReference type="PDB" id="4A60">
    <property type="method" value="X-ray"/>
    <property type="resolution" value="1.53 A"/>
    <property type="chains" value="A=1-132"/>
</dbReference>
<dbReference type="PDB" id="7FY1">
    <property type="method" value="X-ray"/>
    <property type="resolution" value="2.01 A"/>
    <property type="chains" value="A=1-132"/>
</dbReference>
<dbReference type="PDBsum" id="4A60"/>
<dbReference type="PDBsum" id="7FY1"/>
<dbReference type="SMR" id="Q0Z7S8"/>
<dbReference type="FunCoup" id="Q0Z7S8">
    <property type="interactions" value="49"/>
</dbReference>
<dbReference type="STRING" id="9606.ENSP00000368362"/>
<dbReference type="ChEMBL" id="CHEMBL3826865"/>
<dbReference type="iPTMnet" id="Q0Z7S8"/>
<dbReference type="PhosphoSitePlus" id="Q0Z7S8"/>
<dbReference type="BioMuta" id="FABP9"/>
<dbReference type="DMDM" id="121948152"/>
<dbReference type="MassIVE" id="Q0Z7S8"/>
<dbReference type="PaxDb" id="9606-ENSP00000368362"/>
<dbReference type="PeptideAtlas" id="Q0Z7S8"/>
<dbReference type="ProteomicsDB" id="58847"/>
<dbReference type="Antibodypedia" id="59079">
    <property type="antibodies" value="119 antibodies from 14 providers"/>
</dbReference>
<dbReference type="DNASU" id="646480"/>
<dbReference type="Ensembl" id="ENST00000379071.4">
    <property type="protein sequence ID" value="ENSP00000368362.2"/>
    <property type="gene ID" value="ENSG00000205186.4"/>
</dbReference>
<dbReference type="GeneID" id="646480"/>
<dbReference type="KEGG" id="hsa:646480"/>
<dbReference type="MANE-Select" id="ENST00000379071.4">
    <property type="protein sequence ID" value="ENSP00000368362.2"/>
    <property type="RefSeq nucleotide sequence ID" value="NM_001080526.2"/>
    <property type="RefSeq protein sequence ID" value="NP_001073995.1"/>
</dbReference>
<dbReference type="UCSC" id="uc011lfo.3">
    <property type="organism name" value="human"/>
</dbReference>
<dbReference type="AGR" id="HGNC:3563"/>
<dbReference type="CTD" id="646480"/>
<dbReference type="DisGeNET" id="646480"/>
<dbReference type="GeneCards" id="FABP9"/>
<dbReference type="HGNC" id="HGNC:3563">
    <property type="gene designation" value="FABP9"/>
</dbReference>
<dbReference type="HPA" id="ENSG00000205186">
    <property type="expression patterns" value="Tissue enriched (skin)"/>
</dbReference>
<dbReference type="MIM" id="620856">
    <property type="type" value="gene"/>
</dbReference>
<dbReference type="neXtProt" id="NX_Q0Z7S8"/>
<dbReference type="OpenTargets" id="ENSG00000205186"/>
<dbReference type="PharmGKB" id="PA27964"/>
<dbReference type="VEuPathDB" id="HostDB:ENSG00000205186"/>
<dbReference type="eggNOG" id="KOG4015">
    <property type="taxonomic scope" value="Eukaryota"/>
</dbReference>
<dbReference type="GeneTree" id="ENSGT00940000161845"/>
<dbReference type="HOGENOM" id="CLU_113772_0_0_1"/>
<dbReference type="InParanoid" id="Q0Z7S8"/>
<dbReference type="OMA" id="AMIHVQK"/>
<dbReference type="OrthoDB" id="412780at2759"/>
<dbReference type="PAN-GO" id="Q0Z7S8">
    <property type="GO annotations" value="4 GO annotations based on evolutionary models"/>
</dbReference>
<dbReference type="PhylomeDB" id="Q0Z7S8"/>
<dbReference type="TreeFam" id="TF316894"/>
<dbReference type="PathwayCommons" id="Q0Z7S8"/>
<dbReference type="Reactome" id="R-HSA-163560">
    <property type="pathway name" value="Triglyceride catabolism"/>
</dbReference>
<dbReference type="BioGRID-ORCS" id="646480">
    <property type="hits" value="4 hits in 308 CRISPR screens"/>
</dbReference>
<dbReference type="EvolutionaryTrace" id="Q0Z7S8"/>
<dbReference type="GenomeRNAi" id="646480"/>
<dbReference type="Pharos" id="Q0Z7S8">
    <property type="development level" value="Tbio"/>
</dbReference>
<dbReference type="PRO" id="PR:Q0Z7S8"/>
<dbReference type="Proteomes" id="UP000005640">
    <property type="component" value="Chromosome 8"/>
</dbReference>
<dbReference type="RNAct" id="Q0Z7S8">
    <property type="molecule type" value="protein"/>
</dbReference>
<dbReference type="Bgee" id="ENSG00000205186">
    <property type="expression patterns" value="Expressed in subcutaneous adipose tissue and 46 other cell types or tissues"/>
</dbReference>
<dbReference type="GO" id="GO:0005829">
    <property type="term" value="C:cytosol"/>
    <property type="evidence" value="ECO:0000318"/>
    <property type="project" value="GO_Central"/>
</dbReference>
<dbReference type="GO" id="GO:0005634">
    <property type="term" value="C:nucleus"/>
    <property type="evidence" value="ECO:0000318"/>
    <property type="project" value="GO_Central"/>
</dbReference>
<dbReference type="GO" id="GO:0036041">
    <property type="term" value="F:long-chain fatty acid binding"/>
    <property type="evidence" value="ECO:0000318"/>
    <property type="project" value="GO_Central"/>
</dbReference>
<dbReference type="GO" id="GO:0015909">
    <property type="term" value="P:long-chain fatty acid transport"/>
    <property type="evidence" value="ECO:0000318"/>
    <property type="project" value="GO_Central"/>
</dbReference>
<dbReference type="CDD" id="cd19471">
    <property type="entry name" value="FABP9"/>
    <property type="match status" value="1"/>
</dbReference>
<dbReference type="FunFam" id="2.40.128.20:FF:000001">
    <property type="entry name" value="Fatty acid-binding protein, adipocyte"/>
    <property type="match status" value="1"/>
</dbReference>
<dbReference type="Gene3D" id="2.40.128.20">
    <property type="match status" value="1"/>
</dbReference>
<dbReference type="InterPro" id="IPR012674">
    <property type="entry name" value="Calycin"/>
</dbReference>
<dbReference type="InterPro" id="IPR000463">
    <property type="entry name" value="Fatty_acid-bd"/>
</dbReference>
<dbReference type="InterPro" id="IPR031259">
    <property type="entry name" value="ILBP"/>
</dbReference>
<dbReference type="InterPro" id="IPR000566">
    <property type="entry name" value="Lipocln_cytosolic_FA-bd_dom"/>
</dbReference>
<dbReference type="PANTHER" id="PTHR11955">
    <property type="entry name" value="FATTY ACID BINDING PROTEIN"/>
    <property type="match status" value="1"/>
</dbReference>
<dbReference type="Pfam" id="PF00061">
    <property type="entry name" value="Lipocalin"/>
    <property type="match status" value="1"/>
</dbReference>
<dbReference type="PRINTS" id="PR00178">
    <property type="entry name" value="FATTYACIDBP"/>
</dbReference>
<dbReference type="SUPFAM" id="SSF50814">
    <property type="entry name" value="Lipocalins"/>
    <property type="match status" value="1"/>
</dbReference>
<dbReference type="PROSITE" id="PS00214">
    <property type="entry name" value="FABP"/>
    <property type="match status" value="1"/>
</dbReference>